<reference key="1">
    <citation type="submission" date="1994-11" db="EMBL/GenBank/DDBJ databases">
        <authorList>
            <person name="Schuster W."/>
        </authorList>
    </citation>
    <scope>NUCLEOTIDE SEQUENCE [MRNA]</scope>
    <source>
        <strain>cv. C24</strain>
    </source>
</reference>
<reference key="2">
    <citation type="journal article" date="1997" name="Nat. Genet.">
        <title>The mitochondrial genome of Arabidopsis thaliana contains 57 genes in 366,924 nucleotides.</title>
        <authorList>
            <person name="Unseld M."/>
            <person name="Marienfeld J.R."/>
            <person name="Brandt P."/>
            <person name="Brennicke A."/>
        </authorList>
    </citation>
    <scope>NUCLEOTIDE SEQUENCE [LARGE SCALE GENOMIC DNA]</scope>
    <source>
        <strain>cv. C24</strain>
    </source>
</reference>
<reference key="3">
    <citation type="journal article" date="2018" name="Plant Cell">
        <title>Correction of persistent errors in Arabidopsis reference mitochondrial genomes.</title>
        <authorList>
            <person name="Sloan D.B."/>
            <person name="Wu Z."/>
            <person name="Sharbrough J."/>
        </authorList>
    </citation>
    <scope>NUCLEOTIDE SEQUENCE [LARGE SCALE GENOMIC DNA]</scope>
    <scope>RNA EDITING</scope>
    <source>
        <strain>cv. Columbia</strain>
    </source>
</reference>
<reference key="4">
    <citation type="journal article" date="1999" name="Nature">
        <title>Sequence and analysis of chromosome 2 of the plant Arabidopsis thaliana.</title>
        <authorList>
            <person name="Lin X."/>
            <person name="Kaul S."/>
            <person name="Rounsley S.D."/>
            <person name="Shea T.P."/>
            <person name="Benito M.-I."/>
            <person name="Town C.D."/>
            <person name="Fujii C.Y."/>
            <person name="Mason T.M."/>
            <person name="Bowman C.L."/>
            <person name="Barnstead M.E."/>
            <person name="Feldblyum T.V."/>
            <person name="Buell C.R."/>
            <person name="Ketchum K.A."/>
            <person name="Lee J.J."/>
            <person name="Ronning C.M."/>
            <person name="Koo H.L."/>
            <person name="Moffat K.S."/>
            <person name="Cronin L.A."/>
            <person name="Shen M."/>
            <person name="Pai G."/>
            <person name="Van Aken S."/>
            <person name="Umayam L."/>
            <person name="Tallon L.J."/>
            <person name="Gill J.E."/>
            <person name="Adams M.D."/>
            <person name="Carrera A.J."/>
            <person name="Creasy T.H."/>
            <person name="Goodman H.M."/>
            <person name="Somerville C.R."/>
            <person name="Copenhaver G.P."/>
            <person name="Preuss D."/>
            <person name="Nierman W.C."/>
            <person name="White O."/>
            <person name="Eisen J.A."/>
            <person name="Salzberg S.L."/>
            <person name="Fraser C.M."/>
            <person name="Venter J.C."/>
        </authorList>
    </citation>
    <scope>NUCLEOTIDE SEQUENCE [LARGE SCALE GENOMIC DNA] (AT2G07785 AND AT2G07786)</scope>
    <source>
        <strain>cv. Columbia</strain>
    </source>
</reference>
<reference key="5">
    <citation type="journal article" date="2017" name="Plant J.">
        <title>Araport11: a complete reannotation of the Arabidopsis thaliana reference genome.</title>
        <authorList>
            <person name="Cheng C.Y."/>
            <person name="Krishnakumar V."/>
            <person name="Chan A.P."/>
            <person name="Thibaud-Nissen F."/>
            <person name="Schobel S."/>
            <person name="Town C.D."/>
        </authorList>
    </citation>
    <scope>GENOME REANNOTATION (AT2G07785 AND AT2G07786)</scope>
    <source>
        <strain>cv. Columbia</strain>
    </source>
</reference>
<reference key="6">
    <citation type="journal article" date="1999" name="Proc. Natl. Acad. Sci. U.S.A.">
        <title>RNA editing in Arabidopsis mitochondria effects 441 C to U changes in ORFs.</title>
        <authorList>
            <person name="Giege P."/>
            <person name="Brennicke A."/>
        </authorList>
    </citation>
    <scope>RNA EDITING</scope>
</reference>
<reference key="7">
    <citation type="journal article" date="2004" name="Plant Cell">
        <title>Experimental analysis of the Arabidopsis mitochondrial proteome highlights signaling and regulatory components, provides assessment of targeting prediction programs, and indicates plant-specific mitochondrial proteins.</title>
        <authorList>
            <person name="Heazlewood J.L."/>
            <person name="Tonti-Filippini J.S."/>
            <person name="Gout A.M."/>
            <person name="Day D.A."/>
            <person name="Whelan J."/>
            <person name="Millar A.H."/>
        </authorList>
    </citation>
    <scope>IDENTIFICATION BY MASS SPECTROMETRY</scope>
    <scope>SUBCELLULAR LOCATION [LARGE SCALE ANALYSIS]</scope>
    <source>
        <strain>cv. Landsberg erecta</strain>
    </source>
</reference>
<comment type="function">
    <text evidence="1">Core subunit of the mitochondrial membrane respiratory chain NADH dehydrogenase (Complex I) that is believed to belong to the minimal assembly required for catalysis. Complex I functions in the transfer of electrons from NADH to the respiratory chain. The immediate electron acceptor for the enzyme is believed to be ubiquinone (By similarity).</text>
</comment>
<comment type="catalytic activity">
    <reaction>
        <text>a ubiquinone + NADH + 5 H(+)(in) = a ubiquinol + NAD(+) + 4 H(+)(out)</text>
        <dbReference type="Rhea" id="RHEA:29091"/>
        <dbReference type="Rhea" id="RHEA-COMP:9565"/>
        <dbReference type="Rhea" id="RHEA-COMP:9566"/>
        <dbReference type="ChEBI" id="CHEBI:15378"/>
        <dbReference type="ChEBI" id="CHEBI:16389"/>
        <dbReference type="ChEBI" id="CHEBI:17976"/>
        <dbReference type="ChEBI" id="CHEBI:57540"/>
        <dbReference type="ChEBI" id="CHEBI:57945"/>
        <dbReference type="EC" id="7.1.1.2"/>
    </reaction>
</comment>
<comment type="subunit">
    <text>Complex I is composed of at least 49 different subunits.</text>
</comment>
<comment type="subcellular location">
    <subcellularLocation>
        <location evidence="1">Mitochondrion inner membrane</location>
        <topology evidence="1">Multi-pass membrane protein</topology>
    </subcellularLocation>
</comment>
<comment type="RNA editing">
    <location>
        <position position="1" evidence="3 4"/>
    </location>
    <location>
        <position position="56" evidence="3 4"/>
    </location>
    <location>
        <position position="89" evidence="3 4"/>
    </location>
    <location>
        <position position="103" evidence="3 4"/>
    </location>
    <location>
        <position position="126" evidence="3 4"/>
    </location>
    <location>
        <position position="164" evidence="3 4"/>
    </location>
    <location>
        <position position="165" evidence="3 4"/>
    </location>
    <location>
        <position position="167" evidence="3 4"/>
    </location>
    <location>
        <position position="179" evidence="3 4"/>
    </location>
    <location>
        <position position="191" evidence="3 4"/>
    </location>
    <location>
        <position position="194" evidence="3 4"/>
    </location>
    <location>
        <position position="212" evidence="3 4"/>
    </location>
    <location>
        <position position="225" evidence="3 4"/>
    </location>
    <location>
        <position position="242" evidence="3 4"/>
    </location>
    <location>
        <position position="248" evidence="3 4"/>
    </location>
    <location>
        <position position="252" evidence="3 4"/>
    </location>
    <location>
        <position position="275" evidence="3 4"/>
    </location>
    <location>
        <position position="300" evidence="3 4"/>
    </location>
    <location>
        <position position="310" evidence="3 4"/>
    </location>
    <location>
        <position position="313" evidence="3 4"/>
    </location>
    <text>The initiator methionine is created by RNA editing.</text>
</comment>
<comment type="miscellaneous">
    <text>A stretch of 270 kb of the mitochondrial genome is duplicated within the centromere of chromosome 2 resulting in the duplication of the gene. The expression of the duplicated genes (At2g07785 and At2g07786) is not demonstrated. They are also probably not RNA edited and therefore differs in all the positions known to be edited.</text>
</comment>
<comment type="similarity">
    <text evidence="5">Belongs to the complex I subunit 1 family.</text>
</comment>
<dbReference type="EC" id="7.1.1.2"/>
<dbReference type="EMBL" id="X82618">
    <property type="protein sequence ID" value="CAA57940.1"/>
    <property type="status" value="ALT_SEQ"/>
    <property type="molecule type" value="mRNA"/>
</dbReference>
<dbReference type="EMBL" id="Y08501">
    <property type="status" value="NOT_ANNOTATED_CDS"/>
    <property type="molecule type" value="Genomic_DNA"/>
</dbReference>
<dbReference type="EMBL" id="BK010421">
    <property type="protein sequence ID" value="DAB41492.2"/>
    <property type="molecule type" value="Genomic_DNA"/>
</dbReference>
<dbReference type="EMBL" id="AC007729">
    <property type="status" value="NOT_ANNOTATED_CDS"/>
    <property type="molecule type" value="Genomic_DNA"/>
</dbReference>
<dbReference type="EMBL" id="CP002685">
    <property type="status" value="NOT_ANNOTATED_CDS"/>
    <property type="molecule type" value="Genomic_DNA"/>
</dbReference>
<dbReference type="PIR" id="S49576">
    <property type="entry name" value="S49576"/>
</dbReference>
<dbReference type="PDB" id="7A23">
    <property type="method" value="EM"/>
    <property type="resolution" value="3.70 A"/>
    <property type="chains" value="H=1-325"/>
</dbReference>
<dbReference type="PDB" id="7A24">
    <property type="method" value="EM"/>
    <property type="resolution" value="3.80 A"/>
    <property type="chains" value="H=1-325"/>
</dbReference>
<dbReference type="PDB" id="7AQQ">
    <property type="method" value="EM"/>
    <property type="resolution" value="3.06 A"/>
    <property type="chains" value="H=1-325"/>
</dbReference>
<dbReference type="PDB" id="7AR7">
    <property type="method" value="EM"/>
    <property type="resolution" value="3.72 A"/>
    <property type="chains" value="H=2-325"/>
</dbReference>
<dbReference type="PDB" id="7AR8">
    <property type="method" value="EM"/>
    <property type="resolution" value="3.53 A"/>
    <property type="chains" value="H=1-325"/>
</dbReference>
<dbReference type="PDB" id="7ARB">
    <property type="method" value="EM"/>
    <property type="resolution" value="3.41 A"/>
    <property type="chains" value="H=1-325"/>
</dbReference>
<dbReference type="PDB" id="8BEF">
    <property type="method" value="EM"/>
    <property type="resolution" value="2.13 A"/>
    <property type="chains" value="H=1-325"/>
</dbReference>
<dbReference type="PDB" id="8BPX">
    <property type="method" value="EM"/>
    <property type="resolution" value="2.09 A"/>
    <property type="chains" value="H=1-325"/>
</dbReference>
<dbReference type="PDB" id="8BQ5">
    <property type="method" value="EM"/>
    <property type="resolution" value="2.73 A"/>
    <property type="chains" value="H=1-325"/>
</dbReference>
<dbReference type="PDBsum" id="7A23"/>
<dbReference type="PDBsum" id="7A24"/>
<dbReference type="PDBsum" id="7AQQ"/>
<dbReference type="PDBsum" id="7AR7"/>
<dbReference type="PDBsum" id="7AR8"/>
<dbReference type="PDBsum" id="7ARB"/>
<dbReference type="PDBsum" id="8BEF"/>
<dbReference type="PDBsum" id="8BPX"/>
<dbReference type="PDBsum" id="8BQ5"/>
<dbReference type="EMDB" id="EMD-16168"/>
<dbReference type="SMR" id="P92558"/>
<dbReference type="FunCoup" id="P92558">
    <property type="interactions" value="114"/>
</dbReference>
<dbReference type="IntAct" id="P92558">
    <property type="interactions" value="2"/>
</dbReference>
<dbReference type="STRING" id="3702.A0A2P2CLC3"/>
<dbReference type="PaxDb" id="3702-ATMG00516.1"/>
<dbReference type="PeptideAtlas" id="P92558"/>
<dbReference type="Araport" id="AT2G07785"/>
<dbReference type="Araport" id="AT2G07786"/>
<dbReference type="Araport" id="ATMG00516"/>
<dbReference type="Araport" id="ATMG01120"/>
<dbReference type="Araport" id="ATMG01275"/>
<dbReference type="TAIR" id="AT2G07785"/>
<dbReference type="TAIR" id="AT2G07786"/>
<dbReference type="TAIR" id="ATMG00516"/>
<dbReference type="eggNOG" id="KOG4770">
    <property type="taxonomic scope" value="Eukaryota"/>
</dbReference>
<dbReference type="InParanoid" id="P92558"/>
<dbReference type="BioCyc" id="ARA:ATMG01120-MONOMER"/>
<dbReference type="BioCyc" id="MetaCyc:ATMG01120-MONOMER"/>
<dbReference type="BRENDA" id="7.1.1.2">
    <property type="organism ID" value="399"/>
</dbReference>
<dbReference type="PRO" id="PR:P92558"/>
<dbReference type="Proteomes" id="UP000006548">
    <property type="component" value="Chromosome 2"/>
</dbReference>
<dbReference type="Proteomes" id="UP000006548">
    <property type="component" value="Mitochondrion MT"/>
</dbReference>
<dbReference type="ExpressionAtlas" id="P92558">
    <property type="expression patterns" value="baseline and differential"/>
</dbReference>
<dbReference type="GO" id="GO:0005743">
    <property type="term" value="C:mitochondrial inner membrane"/>
    <property type="evidence" value="ECO:0007669"/>
    <property type="project" value="UniProtKB-SubCell"/>
</dbReference>
<dbReference type="GO" id="GO:0045271">
    <property type="term" value="C:respiratory chain complex I"/>
    <property type="evidence" value="ECO:0000318"/>
    <property type="project" value="GO_Central"/>
</dbReference>
<dbReference type="GO" id="GO:0008137">
    <property type="term" value="F:NADH dehydrogenase (ubiquinone) activity"/>
    <property type="evidence" value="ECO:0007669"/>
    <property type="project" value="UniProtKB-EC"/>
</dbReference>
<dbReference type="GO" id="GO:0009060">
    <property type="term" value="P:aerobic respiration"/>
    <property type="evidence" value="ECO:0000318"/>
    <property type="project" value="GO_Central"/>
</dbReference>
<dbReference type="HAMAP" id="MF_01350">
    <property type="entry name" value="NDH1_NuoH"/>
    <property type="match status" value="1"/>
</dbReference>
<dbReference type="InterPro" id="IPR001694">
    <property type="entry name" value="NADH_UbQ_OxRdtase_su1/FPO"/>
</dbReference>
<dbReference type="InterPro" id="IPR018086">
    <property type="entry name" value="NADH_UbQ_OxRdtase_su1_CS"/>
</dbReference>
<dbReference type="NCBIfam" id="NF004741">
    <property type="entry name" value="PRK06076.1-2"/>
    <property type="match status" value="1"/>
</dbReference>
<dbReference type="NCBIfam" id="NF004745">
    <property type="entry name" value="PRK06076.1-6"/>
    <property type="match status" value="1"/>
</dbReference>
<dbReference type="PANTHER" id="PTHR11432">
    <property type="entry name" value="NADH DEHYDROGENASE SUBUNIT 1"/>
    <property type="match status" value="1"/>
</dbReference>
<dbReference type="PANTHER" id="PTHR11432:SF3">
    <property type="entry name" value="NADH-UBIQUINONE OXIDOREDUCTASE CHAIN 1"/>
    <property type="match status" value="1"/>
</dbReference>
<dbReference type="Pfam" id="PF00146">
    <property type="entry name" value="NADHdh"/>
    <property type="match status" value="1"/>
</dbReference>
<dbReference type="PROSITE" id="PS00667">
    <property type="entry name" value="COMPLEX1_ND1_1"/>
    <property type="match status" value="1"/>
</dbReference>
<dbReference type="PROSITE" id="PS00668">
    <property type="entry name" value="COMPLEX1_ND1_2"/>
    <property type="match status" value="1"/>
</dbReference>
<geneLocation type="mitochondrion"/>
<sequence>MYIAVPAEILGIILPLLLGVAFLVLAERKVMAFVQRRKGPDVVGSFGLLQPLADGLKLILKEPISPSSANFFLFRMAPVATFMLSLVAWAVVPFDYGMVLSDLNIGLLYLFAISSLGVYGIIIAGWSSISKYAFLGALRSAAQMVSYEVSIGLILITVLICVGSCNLSEIVMAQKQIWFGIPLFPVLVMFFISCLAETNRAPFDLPEAEAELVAGYNVEYSSMGFALFFLGEYANMILMSGLCTLFFLGGWLPILDLPIFKKIPGSIWFSIKVLFFLFLYIWVRAAFPRYRYDQLMGLGWKVFLPLSLARVVPVSGLLVTFQWLP</sequence>
<gene>
    <name type="primary">ND1</name>
    <name type="synonym">NAD1</name>
    <name evidence="8 9 10" type="ordered locus">AtMg00516/AtMg01120/AtMg01275</name>
</gene>
<gene>
    <name evidence="6" type="ordered locus">At2g07785</name>
</gene>
<gene>
    <name evidence="7" type="ordered locus">At2g07786</name>
</gene>
<name>NU1M_ARATH</name>
<evidence type="ECO:0000250" key="1"/>
<evidence type="ECO:0000255" key="2"/>
<evidence type="ECO:0000269" key="3">
    <source>
    </source>
</evidence>
<evidence type="ECO:0000269" key="4">
    <source>
    </source>
</evidence>
<evidence type="ECO:0000305" key="5"/>
<evidence type="ECO:0000312" key="6">
    <source>
        <dbReference type="Araport" id="AT2G07785"/>
    </source>
</evidence>
<evidence type="ECO:0000312" key="7">
    <source>
        <dbReference type="Araport" id="AT2G07786"/>
    </source>
</evidence>
<evidence type="ECO:0000312" key="8">
    <source>
        <dbReference type="Araport" id="ATMG00516"/>
    </source>
</evidence>
<evidence type="ECO:0000312" key="9">
    <source>
        <dbReference type="Araport" id="ATMG01120"/>
    </source>
</evidence>
<evidence type="ECO:0000312" key="10">
    <source>
        <dbReference type="Araport" id="ATMG01275"/>
    </source>
</evidence>
<evidence type="ECO:0007829" key="11">
    <source>
        <dbReference type="PDB" id="7AQQ"/>
    </source>
</evidence>
<evidence type="ECO:0007829" key="12">
    <source>
        <dbReference type="PDB" id="8BEF"/>
    </source>
</evidence>
<feature type="chain" id="PRO_0000117344" description="NADH-ubiquinone oxidoreductase chain 1">
    <location>
        <begin position="1"/>
        <end position="325"/>
    </location>
</feature>
<feature type="transmembrane region" description="Helical" evidence="2">
    <location>
        <begin position="5"/>
        <end position="25"/>
    </location>
</feature>
<feature type="transmembrane region" description="Helical" evidence="2">
    <location>
        <begin position="68"/>
        <end position="88"/>
    </location>
</feature>
<feature type="transmembrane region" description="Helical" evidence="2">
    <location>
        <begin position="105"/>
        <end position="125"/>
    </location>
</feature>
<feature type="transmembrane region" description="Helical" evidence="2">
    <location>
        <begin position="144"/>
        <end position="164"/>
    </location>
</feature>
<feature type="transmembrane region" description="Helical" evidence="2">
    <location>
        <begin position="177"/>
        <end position="197"/>
    </location>
</feature>
<feature type="transmembrane region" description="Helical" evidence="2">
    <location>
        <begin position="227"/>
        <end position="247"/>
    </location>
</feature>
<feature type="transmembrane region" description="Helical" evidence="2">
    <location>
        <begin position="263"/>
        <end position="283"/>
    </location>
</feature>
<feature type="transmembrane region" description="Helical" evidence="2">
    <location>
        <begin position="302"/>
        <end position="322"/>
    </location>
</feature>
<feature type="sequence conflict" description="In Ref. 1; CAA57940." evidence="5" ref="1">
    <original>I</original>
    <variation>N</variation>
    <location>
        <position position="129"/>
    </location>
</feature>
<feature type="helix" evidence="12">
    <location>
        <begin position="5"/>
        <end position="34"/>
    </location>
</feature>
<feature type="turn" evidence="12">
    <location>
        <begin position="42"/>
        <end position="44"/>
    </location>
</feature>
<feature type="helix" evidence="12">
    <location>
        <begin position="45"/>
        <end position="47"/>
    </location>
</feature>
<feature type="helix" evidence="12">
    <location>
        <begin position="50"/>
        <end position="59"/>
    </location>
</feature>
<feature type="helix" evidence="12">
    <location>
        <begin position="71"/>
        <end position="87"/>
    </location>
</feature>
<feature type="helix" evidence="12">
    <location>
        <begin position="88"/>
        <end position="91"/>
    </location>
</feature>
<feature type="helix" evidence="12">
    <location>
        <begin position="106"/>
        <end position="116"/>
    </location>
</feature>
<feature type="helix" evidence="12">
    <location>
        <begin position="118"/>
        <end position="127"/>
    </location>
</feature>
<feature type="helix" evidence="12">
    <location>
        <begin position="131"/>
        <end position="162"/>
    </location>
</feature>
<feature type="helix" evidence="12">
    <location>
        <begin position="167"/>
        <end position="172"/>
    </location>
</feature>
<feature type="strand" evidence="12">
    <location>
        <begin position="175"/>
        <end position="177"/>
    </location>
</feature>
<feature type="turn" evidence="12">
    <location>
        <begin position="179"/>
        <end position="183"/>
    </location>
</feature>
<feature type="helix" evidence="12">
    <location>
        <begin position="184"/>
        <end position="197"/>
    </location>
</feature>
<feature type="helix" evidence="11">
    <location>
        <begin position="201"/>
        <end position="203"/>
    </location>
</feature>
<feature type="helix" evidence="12">
    <location>
        <begin position="205"/>
        <end position="207"/>
    </location>
</feature>
<feature type="helix" evidence="12">
    <location>
        <begin position="209"/>
        <end position="211"/>
    </location>
</feature>
<feature type="turn" evidence="12">
    <location>
        <begin position="216"/>
        <end position="219"/>
    </location>
</feature>
<feature type="helix" evidence="12">
    <location>
        <begin position="222"/>
        <end position="247"/>
    </location>
</feature>
<feature type="strand" evidence="12">
    <location>
        <begin position="254"/>
        <end position="257"/>
    </location>
</feature>
<feature type="helix" evidence="12">
    <location>
        <begin position="258"/>
        <end position="261"/>
    </location>
</feature>
<feature type="helix" evidence="12">
    <location>
        <begin position="265"/>
        <end position="286"/>
    </location>
</feature>
<feature type="helix" evidence="12">
    <location>
        <begin position="292"/>
        <end position="301"/>
    </location>
</feature>
<feature type="helix" evidence="12">
    <location>
        <begin position="303"/>
        <end position="320"/>
    </location>
</feature>
<keyword id="KW-0002">3D-structure</keyword>
<keyword id="KW-0249">Electron transport</keyword>
<keyword id="KW-0472">Membrane</keyword>
<keyword id="KW-0496">Mitochondrion</keyword>
<keyword id="KW-0999">Mitochondrion inner membrane</keyword>
<keyword id="KW-0520">NAD</keyword>
<keyword id="KW-1185">Reference proteome</keyword>
<keyword id="KW-0679">Respiratory chain</keyword>
<keyword id="KW-0691">RNA editing</keyword>
<keyword id="KW-1278">Translocase</keyword>
<keyword id="KW-0812">Transmembrane</keyword>
<keyword id="KW-1133">Transmembrane helix</keyword>
<keyword id="KW-0813">Transport</keyword>
<keyword id="KW-0830">Ubiquinone</keyword>
<protein>
    <recommendedName>
        <fullName>NADH-ubiquinone oxidoreductase chain 1</fullName>
        <ecNumber>7.1.1.2</ecNumber>
    </recommendedName>
    <alternativeName>
        <fullName>NADH dehydrogenase subunit 1</fullName>
    </alternativeName>
</protein>
<organism>
    <name type="scientific">Arabidopsis thaliana</name>
    <name type="common">Mouse-ear cress</name>
    <dbReference type="NCBI Taxonomy" id="3702"/>
    <lineage>
        <taxon>Eukaryota</taxon>
        <taxon>Viridiplantae</taxon>
        <taxon>Streptophyta</taxon>
        <taxon>Embryophyta</taxon>
        <taxon>Tracheophyta</taxon>
        <taxon>Spermatophyta</taxon>
        <taxon>Magnoliopsida</taxon>
        <taxon>eudicotyledons</taxon>
        <taxon>Gunneridae</taxon>
        <taxon>Pentapetalae</taxon>
        <taxon>rosids</taxon>
        <taxon>malvids</taxon>
        <taxon>Brassicales</taxon>
        <taxon>Brassicaceae</taxon>
        <taxon>Camelineae</taxon>
        <taxon>Arabidopsis</taxon>
    </lineage>
</organism>
<proteinExistence type="evidence at protein level"/>
<accession>P92558</accession>
<accession>A0A2P2CLC3</accession>
<accession>Q42576</accession>